<protein>
    <recommendedName>
        <fullName evidence="3">(+)-eremophilene synthase</fullName>
        <ecNumber evidence="2">4.2.3.164</ecNumber>
    </recommendedName>
    <alternativeName>
        <fullName evidence="3">Sesquiterpene cyclase</fullName>
    </alternativeName>
    <alternativeName>
        <fullName evidence="3">Terpene synthase</fullName>
    </alternativeName>
    <alternativeName>
        <fullName evidence="3">Type I terpene cyclase</fullName>
    </alternativeName>
</protein>
<feature type="chain" id="PRO_0000443303" description="(+)-eremophilene synthase">
    <location>
        <begin position="1"/>
        <end position="329"/>
    </location>
</feature>
<feature type="short sequence motif" description="DDXXD motif" evidence="5">
    <location>
        <begin position="91"/>
        <end position="95"/>
    </location>
</feature>
<feature type="binding site" evidence="1">
    <location>
        <position position="91"/>
    </location>
    <ligand>
        <name>Mg(2+)</name>
        <dbReference type="ChEBI" id="CHEBI:18420"/>
        <label>1</label>
    </ligand>
</feature>
<feature type="binding site" evidence="1">
    <location>
        <position position="96"/>
    </location>
    <ligand>
        <name>Mg(2+)</name>
        <dbReference type="ChEBI" id="CHEBI:18420"/>
        <label>1</label>
    </ligand>
</feature>
<feature type="binding site" evidence="1">
    <location>
        <position position="96"/>
    </location>
    <ligand>
        <name>Mg(2+)</name>
        <dbReference type="ChEBI" id="CHEBI:18420"/>
        <label>2</label>
    </ligand>
</feature>
<feature type="binding site" evidence="1">
    <location>
        <position position="185"/>
    </location>
    <ligand>
        <name>substrate</name>
    </ligand>
</feature>
<feature type="binding site" evidence="1">
    <location>
        <position position="231"/>
    </location>
    <ligand>
        <name>Mg(2+)</name>
        <dbReference type="ChEBI" id="CHEBI:18420"/>
        <label>3</label>
    </ligand>
</feature>
<feature type="binding site" evidence="1">
    <location>
        <position position="235"/>
    </location>
    <ligand>
        <name>Mg(2+)</name>
        <dbReference type="ChEBI" id="CHEBI:18420"/>
        <label>3</label>
    </ligand>
</feature>
<feature type="binding site" evidence="1">
    <location>
        <position position="238"/>
    </location>
    <ligand>
        <name>substrate</name>
    </ligand>
</feature>
<feature type="binding site" evidence="1">
    <location>
        <position position="239"/>
    </location>
    <ligand>
        <name>Mg(2+)</name>
        <dbReference type="ChEBI" id="CHEBI:18420"/>
        <label>3</label>
    </ligand>
</feature>
<feature type="binding site" evidence="1">
    <location>
        <begin position="317"/>
        <end position="318"/>
    </location>
    <ligand>
        <name>substrate</name>
    </ligand>
</feature>
<proteinExistence type="evidence at protein level"/>
<dbReference type="EC" id="4.2.3.164" evidence="2"/>
<dbReference type="EMBL" id="AM746676">
    <property type="protein sequence ID" value="CAN98722.1"/>
    <property type="molecule type" value="Genomic_DNA"/>
</dbReference>
<dbReference type="RefSeq" id="WP_012241161.1">
    <property type="nucleotide sequence ID" value="NC_010162.1"/>
</dbReference>
<dbReference type="SMR" id="A9FZ87"/>
<dbReference type="STRING" id="448385.sce8552"/>
<dbReference type="KEGG" id="scl:sce8552"/>
<dbReference type="eggNOG" id="COG0664">
    <property type="taxonomic scope" value="Bacteria"/>
</dbReference>
<dbReference type="HOGENOM" id="CLU_042538_4_2_7"/>
<dbReference type="OrthoDB" id="2989600at2"/>
<dbReference type="BioCyc" id="SCEL448385:SCE_RS43810-MONOMER"/>
<dbReference type="BRENDA" id="4.2.3.164">
    <property type="organism ID" value="9327"/>
</dbReference>
<dbReference type="UniPathway" id="UPA00213"/>
<dbReference type="Proteomes" id="UP000002139">
    <property type="component" value="Chromosome"/>
</dbReference>
<dbReference type="GO" id="GO:0046872">
    <property type="term" value="F:metal ion binding"/>
    <property type="evidence" value="ECO:0007669"/>
    <property type="project" value="UniProtKB-KW"/>
</dbReference>
<dbReference type="GO" id="GO:0010333">
    <property type="term" value="F:terpene synthase activity"/>
    <property type="evidence" value="ECO:0007669"/>
    <property type="project" value="InterPro"/>
</dbReference>
<dbReference type="GO" id="GO:0016114">
    <property type="term" value="P:terpenoid biosynthetic process"/>
    <property type="evidence" value="ECO:0007669"/>
    <property type="project" value="UniProtKB-UniPathway"/>
</dbReference>
<dbReference type="Gene3D" id="1.10.600.10">
    <property type="entry name" value="Farnesyl Diphosphate Synthase"/>
    <property type="match status" value="1"/>
</dbReference>
<dbReference type="InterPro" id="IPR008949">
    <property type="entry name" value="Isoprenoid_synthase_dom_sf"/>
</dbReference>
<dbReference type="InterPro" id="IPR034686">
    <property type="entry name" value="Terpene_cyclase-like_2"/>
</dbReference>
<dbReference type="PANTHER" id="PTHR35201:SF4">
    <property type="entry name" value="BETA-PINACENE SYNTHASE-RELATED"/>
    <property type="match status" value="1"/>
</dbReference>
<dbReference type="PANTHER" id="PTHR35201">
    <property type="entry name" value="TERPENE SYNTHASE"/>
    <property type="match status" value="1"/>
</dbReference>
<dbReference type="Pfam" id="PF19086">
    <property type="entry name" value="Terpene_syn_C_2"/>
    <property type="match status" value="1"/>
</dbReference>
<dbReference type="SFLD" id="SFLDS00005">
    <property type="entry name" value="Isoprenoid_Synthase_Type_I"/>
    <property type="match status" value="1"/>
</dbReference>
<dbReference type="SFLD" id="SFLDG01020">
    <property type="entry name" value="Terpene_Cyclase_Like_2"/>
    <property type="match status" value="1"/>
</dbReference>
<dbReference type="SUPFAM" id="SSF48576">
    <property type="entry name" value="Terpenoid synthases"/>
    <property type="match status" value="1"/>
</dbReference>
<gene>
    <name evidence="3" type="primary">geoA</name>
    <name evidence="6" type="ordered locus">sce8552</name>
</gene>
<keyword id="KW-0456">Lyase</keyword>
<keyword id="KW-0460">Magnesium</keyword>
<keyword id="KW-0479">Metal-binding</keyword>
<keyword id="KW-1185">Reference proteome</keyword>
<comment type="function">
    <text evidence="2">Catalyzes the conversion of (2E,6E)-farnesyl diphosphate (FPP) to yield the bicyclic sesquiterpene eremophilene via a 1,10-cyclization, which requires the abstraction of the pyrophosphate from FPP to yield the (E,E)-germacradienyl cation. The only accepted substrate is farnesyl diphosphate (FPP).</text>
</comment>
<comment type="catalytic activity">
    <reaction evidence="2">
        <text>(2E,6E)-farnesyl diphosphate = (+)-eremophilene + diphosphate</text>
        <dbReference type="Rhea" id="RHEA:52804"/>
        <dbReference type="ChEBI" id="CHEBI:33019"/>
        <dbReference type="ChEBI" id="CHEBI:137562"/>
        <dbReference type="ChEBI" id="CHEBI:175763"/>
        <dbReference type="EC" id="4.2.3.164"/>
    </reaction>
</comment>
<comment type="cofactor">
    <cofactor evidence="1">
        <name>Mg(2+)</name>
        <dbReference type="ChEBI" id="CHEBI:18420"/>
    </cofactor>
    <text evidence="1">Binds 3 Mg(2+) ions per subunit.</text>
</comment>
<comment type="pathway">
    <text evidence="5">Secondary metabolite biosynthesis; terpenoid biosynthesis.</text>
</comment>
<comment type="domain">
    <text evidence="5">The Asp-Asp-Xaa-Xaa-Asp (DDXXD) motif is important for the catalytic activity, presumably through binding to Mg(2+).</text>
</comment>
<comment type="similarity">
    <text evidence="4">Belongs to the terpene synthase family.</text>
</comment>
<accession>A9FZ87</accession>
<organism>
    <name type="scientific">Sorangium cellulosum (strain So ce56)</name>
    <name type="common">Polyangium cellulosum (strain So ce56)</name>
    <dbReference type="NCBI Taxonomy" id="448385"/>
    <lineage>
        <taxon>Bacteria</taxon>
        <taxon>Pseudomonadati</taxon>
        <taxon>Myxococcota</taxon>
        <taxon>Polyangia</taxon>
        <taxon>Polyangiales</taxon>
        <taxon>Polyangiaceae</taxon>
        <taxon>Sorangium</taxon>
    </lineage>
</organism>
<evidence type="ECO:0000250" key="1">
    <source>
        <dbReference type="UniProtKB" id="B5HDJ6"/>
    </source>
</evidence>
<evidence type="ECO:0000269" key="2">
    <source>
    </source>
</evidence>
<evidence type="ECO:0000303" key="3">
    <source>
    </source>
</evidence>
<evidence type="ECO:0000305" key="4"/>
<evidence type="ECO:0000305" key="5">
    <source>
    </source>
</evidence>
<evidence type="ECO:0000312" key="6">
    <source>
        <dbReference type="EMBL" id="CAN98722.1"/>
    </source>
</evidence>
<evidence type="ECO:0000312" key="7">
    <source>
        <dbReference type="Proteomes" id="UP000002139"/>
    </source>
</evidence>
<reference key="1">
    <citation type="journal article" date="2007" name="Nat. Biotechnol.">
        <title>Complete genome sequence of the myxobacterium Sorangium cellulosum.</title>
        <authorList>
            <person name="Schneiker S."/>
            <person name="Perlova O."/>
            <person name="Kaiser O."/>
            <person name="Gerth K."/>
            <person name="Alici A."/>
            <person name="Altmeyer M.O."/>
            <person name="Bartels D."/>
            <person name="Bekel T."/>
            <person name="Beyer S."/>
            <person name="Bode E."/>
            <person name="Bode H.B."/>
            <person name="Bolten C.J."/>
            <person name="Choudhuri J.V."/>
            <person name="Doss S."/>
            <person name="Elnakady Y.A."/>
            <person name="Frank B."/>
            <person name="Gaigalat L."/>
            <person name="Goesmann A."/>
            <person name="Groeger C."/>
            <person name="Gross F."/>
            <person name="Jelsbak L."/>
            <person name="Jelsbak L."/>
            <person name="Kalinowski J."/>
            <person name="Kegler C."/>
            <person name="Knauber T."/>
            <person name="Konietzny S."/>
            <person name="Kopp M."/>
            <person name="Krause L."/>
            <person name="Krug D."/>
            <person name="Linke B."/>
            <person name="Mahmud T."/>
            <person name="Martinez-Arias R."/>
            <person name="McHardy A.C."/>
            <person name="Merai M."/>
            <person name="Meyer F."/>
            <person name="Mormann S."/>
            <person name="Munoz-Dorado J."/>
            <person name="Perez J."/>
            <person name="Pradella S."/>
            <person name="Rachid S."/>
            <person name="Raddatz G."/>
            <person name="Rosenau F."/>
            <person name="Rueckert C."/>
            <person name="Sasse F."/>
            <person name="Scharfe M."/>
            <person name="Schuster S.C."/>
            <person name="Suen G."/>
            <person name="Treuner-Lange A."/>
            <person name="Velicer G.J."/>
            <person name="Vorholter F.-J."/>
            <person name="Weissman K.J."/>
            <person name="Welch R.D."/>
            <person name="Wenzel S.C."/>
            <person name="Whitworth D.E."/>
            <person name="Wilhelm S."/>
            <person name="Wittmann C."/>
            <person name="Bloecker H."/>
            <person name="Puehler A."/>
            <person name="Mueller R."/>
        </authorList>
    </citation>
    <scope>NUCLEOTIDE SEQUENCE [LARGE SCALE GENOMIC DNA]</scope>
    <source>
        <strain evidence="7">So ce56</strain>
    </source>
</reference>
<reference key="2">
    <citation type="journal article" date="2015" name="ChemBioChem">
        <title>Characterization of the gene cluster CYP264B1-geoA from Sorangium cellulosum So ce56: biosynthesis of (+)-eremophilene and its hydroxylation.</title>
        <authorList>
            <person name="Schifrin A."/>
            <person name="Ly T.T."/>
            <person name="Guennewich N."/>
            <person name="Zapp J."/>
            <person name="Thiel V."/>
            <person name="Schulz S."/>
            <person name="Hannemann F."/>
            <person name="Khatri Y."/>
            <person name="Bernhardt R."/>
        </authorList>
    </citation>
    <scope>FUNCTION</scope>
    <scope>CATALYTIC ACTIVITY</scope>
    <scope>SUBSTRATE SPECIFICITY</scope>
    <scope>DOMAIN</scope>
    <scope>PATHWAY</scope>
    <source>
        <strain>So ce56</strain>
    </source>
</reference>
<name>EREMS_SORC5</name>
<sequence>MSSDRTSVVVSKRDAGGFEYPFAASCHPGREVTEQRTLAWVRRLRLVPDGRSLSRLKATNFSHLAAWLLPSASTQTLQLASDFTAVLFLLDDAYDEGQLSTDPESVEWLNEKYLGELFGYTEADMSDPLTRGMLDVRERIRRSHPHFFLNRWLSHFQYYYEANLWEANNRKQMRVPHLEEYLMMRRYSGAVYTYCDLLELLLERPLPLEVVQHPLIQTVRDICNDILCWTNDYFSLGKELTNGETHNLIVVLRNECVSTLEEAIDRLKDMHDRRVAEYQGVKEKVLALWADDEIRLYLDAVEAMIAGNQRWALEAGRYSGLESLIVRAG</sequence>